<proteinExistence type="predicted"/>
<evidence type="ECO:0000256" key="1">
    <source>
        <dbReference type="SAM" id="MobiDB-lite"/>
    </source>
</evidence>
<evidence type="ECO:0000305" key="2"/>
<evidence type="ECO:0000305" key="3">
    <source>
    </source>
</evidence>
<dbReference type="EMBL" id="U35016">
    <property type="protein sequence ID" value="AAC45472.1"/>
    <property type="molecule type" value="Genomic_DNA"/>
</dbReference>
<dbReference type="SMR" id="Q49538"/>
<dbReference type="GO" id="GO:0005886">
    <property type="term" value="C:plasma membrane"/>
    <property type="evidence" value="ECO:0007669"/>
    <property type="project" value="UniProtKB-SubCell"/>
</dbReference>
<dbReference type="InterPro" id="IPR049890">
    <property type="entry name" value="VlpA-F-like_signal"/>
</dbReference>
<dbReference type="NCBIfam" id="NF033817">
    <property type="entry name" value="Mplas_variab_LP"/>
    <property type="match status" value="1"/>
</dbReference>
<dbReference type="PROSITE" id="PS51257">
    <property type="entry name" value="PROKAR_LIPOPROTEIN"/>
    <property type="match status" value="1"/>
</dbReference>
<reference key="1">
    <citation type="journal article" date="1995" name="J. Bacteriol.">
        <title>Increased structural and combinatorial diversity in an extended family of genes encoding Vlp surface proteins of Mycoplasma hyorhinis.</title>
        <authorList>
            <person name="Yogev D."/>
            <person name="Watson-Mckown R."/>
            <person name="Rosengarten R."/>
            <person name="Im J."/>
            <person name="Wise K.S."/>
        </authorList>
    </citation>
    <scope>NUCLEOTIDE SEQUENCE [GENOMIC DNA]</scope>
    <scope>POSSIBLE EXPRESSION</scope>
    <source>
        <strain>GDL-1</strain>
    </source>
</reference>
<name>VLPF_MESHY</name>
<keyword id="KW-1003">Cell membrane</keyword>
<keyword id="KW-0449">Lipoprotein</keyword>
<keyword id="KW-0472">Membrane</keyword>
<keyword id="KW-0564">Palmitate</keyword>
<keyword id="KW-0677">Repeat</keyword>
<keyword id="KW-0732">Signal</keyword>
<feature type="signal peptide" evidence="2">
    <location>
        <begin position="1"/>
        <end position="29"/>
    </location>
</feature>
<feature type="chain" id="PRO_0000018218" description="Variant surface antigen F">
    <location>
        <begin position="30"/>
        <end position="174"/>
    </location>
</feature>
<feature type="repeat" description="1">
    <location>
        <begin position="55"/>
        <end position="67"/>
    </location>
</feature>
<feature type="repeat" description="2">
    <location>
        <begin position="68"/>
        <end position="80"/>
    </location>
</feature>
<feature type="repeat" description="3">
    <location>
        <begin position="81"/>
        <end position="93"/>
    </location>
</feature>
<feature type="repeat" description="4">
    <location>
        <begin position="94"/>
        <end position="106"/>
    </location>
</feature>
<feature type="repeat" description="5">
    <location>
        <begin position="107"/>
        <end position="119"/>
    </location>
</feature>
<feature type="repeat" description="6">
    <location>
        <begin position="120"/>
        <end position="132"/>
    </location>
</feature>
<feature type="repeat" description="7">
    <location>
        <begin position="133"/>
        <end position="145"/>
    </location>
</feature>
<feature type="repeat" description="8">
    <location>
        <begin position="146"/>
        <end position="158"/>
    </location>
</feature>
<feature type="repeat" description="9">
    <location>
        <begin position="159"/>
        <end position="171"/>
    </location>
</feature>
<feature type="region of interest" description="Disordered" evidence="1">
    <location>
        <begin position="32"/>
        <end position="174"/>
    </location>
</feature>
<feature type="region of interest" description="9 X 13 AA tandem repeats">
    <location>
        <begin position="55"/>
        <end position="171"/>
    </location>
</feature>
<feature type="compositionally biased region" description="Gly residues" evidence="1">
    <location>
        <begin position="43"/>
        <end position="53"/>
    </location>
</feature>
<feature type="compositionally biased region" description="Polar residues" evidence="1">
    <location>
        <begin position="62"/>
        <end position="174"/>
    </location>
</feature>
<feature type="lipid moiety-binding region" description="N-palmitoyl cysteine" evidence="2">
    <location>
        <position position="30"/>
    </location>
</feature>
<feature type="lipid moiety-binding region" description="S-diacylglycerol cysteine" evidence="2">
    <location>
        <position position="30"/>
    </location>
</feature>
<comment type="function">
    <text evidence="3">Responsible for the antigenic diversity for host adaptation. Expression in E.coli of a construct containing vlpD, vlpE, and vlpF yields antigenically distinguishable products corresponding to each gene.</text>
</comment>
<comment type="subcellular location">
    <subcellularLocation>
        <location evidence="2">Cell membrane</location>
        <topology evidence="2">Lipid-anchor</topology>
    </subcellularLocation>
</comment>
<comment type="miscellaneous">
    <text>The numbers of repeats can vary and is one of the basis of the antigenic diversity.</text>
</comment>
<sequence>MKKSIFSKKLLFSFGSLVALAAIPLITISCGQTNTDQSQQPGSGSGSGSGTSNGSGSTPTPEQGNNQGGSTPTPEQGNNQGGSTPTPEQGNNQGGSTPTPEQGNNQGGSTPTPEQGNNQGGSTPTPEQGNNQGGSTPTPEQGNNQGGSTPTPEQGNNQGGSTPTPEQGNSQVSK</sequence>
<accession>Q49538</accession>
<protein>
    <recommendedName>
        <fullName>Variant surface antigen F</fullName>
    </recommendedName>
    <alternativeName>
        <fullName>VlpF prolipoprotein</fullName>
    </alternativeName>
</protein>
<gene>
    <name type="primary">vlpF</name>
</gene>
<organism>
    <name type="scientific">Mesomycoplasma hyorhinis</name>
    <name type="common">Mycoplasma hyorhinis</name>
    <dbReference type="NCBI Taxonomy" id="2100"/>
    <lineage>
        <taxon>Bacteria</taxon>
        <taxon>Bacillati</taxon>
        <taxon>Mycoplasmatota</taxon>
        <taxon>Mycoplasmoidales</taxon>
        <taxon>Metamycoplasmataceae</taxon>
        <taxon>Mesomycoplasma</taxon>
    </lineage>
</organism>